<name>NQRB_PSEA8</name>
<gene>
    <name evidence="1" type="primary">nqrB</name>
    <name type="ordered locus">PLES_20641</name>
</gene>
<dbReference type="EC" id="7.2.1.1" evidence="1"/>
<dbReference type="EMBL" id="FM209186">
    <property type="protein sequence ID" value="CAW26791.1"/>
    <property type="molecule type" value="Genomic_DNA"/>
</dbReference>
<dbReference type="RefSeq" id="WP_003109478.1">
    <property type="nucleotide sequence ID" value="NC_011770.1"/>
</dbReference>
<dbReference type="SMR" id="B7UZT8"/>
<dbReference type="KEGG" id="pag:PLES_20641"/>
<dbReference type="HOGENOM" id="CLU_042020_1_1_6"/>
<dbReference type="GO" id="GO:0005886">
    <property type="term" value="C:plasma membrane"/>
    <property type="evidence" value="ECO:0007669"/>
    <property type="project" value="UniProtKB-SubCell"/>
</dbReference>
<dbReference type="GO" id="GO:0010181">
    <property type="term" value="F:FMN binding"/>
    <property type="evidence" value="ECO:0007669"/>
    <property type="project" value="InterPro"/>
</dbReference>
<dbReference type="GO" id="GO:0016655">
    <property type="term" value="F:oxidoreductase activity, acting on NAD(P)H, quinone or similar compound as acceptor"/>
    <property type="evidence" value="ECO:0007669"/>
    <property type="project" value="UniProtKB-UniRule"/>
</dbReference>
<dbReference type="GO" id="GO:0022904">
    <property type="term" value="P:respiratory electron transport chain"/>
    <property type="evidence" value="ECO:0007669"/>
    <property type="project" value="InterPro"/>
</dbReference>
<dbReference type="GO" id="GO:0006814">
    <property type="term" value="P:sodium ion transport"/>
    <property type="evidence" value="ECO:0007669"/>
    <property type="project" value="UniProtKB-UniRule"/>
</dbReference>
<dbReference type="GO" id="GO:0055085">
    <property type="term" value="P:transmembrane transport"/>
    <property type="evidence" value="ECO:0007669"/>
    <property type="project" value="InterPro"/>
</dbReference>
<dbReference type="HAMAP" id="MF_00426">
    <property type="entry name" value="NqrB"/>
    <property type="match status" value="1"/>
</dbReference>
<dbReference type="InterPro" id="IPR010966">
    <property type="entry name" value="NqrB"/>
</dbReference>
<dbReference type="InterPro" id="IPR004338">
    <property type="entry name" value="NqrB/RnfD"/>
</dbReference>
<dbReference type="NCBIfam" id="TIGR01937">
    <property type="entry name" value="nqrB"/>
    <property type="match status" value="1"/>
</dbReference>
<dbReference type="NCBIfam" id="NF003756">
    <property type="entry name" value="PRK05349.1"/>
    <property type="match status" value="1"/>
</dbReference>
<dbReference type="PANTHER" id="PTHR30578">
    <property type="entry name" value="ELECTRON TRANSPORT COMPLEX PROTEIN RNFD"/>
    <property type="match status" value="1"/>
</dbReference>
<dbReference type="PANTHER" id="PTHR30578:SF1">
    <property type="entry name" value="NA(+)-TRANSLOCATING NADH-QUINONE REDUCTASE SUBUNIT B"/>
    <property type="match status" value="1"/>
</dbReference>
<dbReference type="Pfam" id="PF03116">
    <property type="entry name" value="NQR2_RnfD_RnfE"/>
    <property type="match status" value="1"/>
</dbReference>
<dbReference type="PIRSF" id="PIRSF016055">
    <property type="entry name" value="NADH-UbQ_OxRdtase_B_su"/>
    <property type="match status" value="1"/>
</dbReference>
<organism>
    <name type="scientific">Pseudomonas aeruginosa (strain LESB58)</name>
    <dbReference type="NCBI Taxonomy" id="557722"/>
    <lineage>
        <taxon>Bacteria</taxon>
        <taxon>Pseudomonadati</taxon>
        <taxon>Pseudomonadota</taxon>
        <taxon>Gammaproteobacteria</taxon>
        <taxon>Pseudomonadales</taxon>
        <taxon>Pseudomonadaceae</taxon>
        <taxon>Pseudomonas</taxon>
    </lineage>
</organism>
<comment type="function">
    <text evidence="1">NQR complex catalyzes the reduction of ubiquinone-1 to ubiquinol by two successive reactions, coupled with the transport of Na(+) ions from the cytoplasm to the periplasm. NqrA to NqrE are probably involved in the second step, the conversion of ubisemiquinone to ubiquinol.</text>
</comment>
<comment type="catalytic activity">
    <reaction evidence="1">
        <text>a ubiquinone + n Na(+)(in) + NADH + H(+) = a ubiquinol + n Na(+)(out) + NAD(+)</text>
        <dbReference type="Rhea" id="RHEA:47748"/>
        <dbReference type="Rhea" id="RHEA-COMP:9565"/>
        <dbReference type="Rhea" id="RHEA-COMP:9566"/>
        <dbReference type="ChEBI" id="CHEBI:15378"/>
        <dbReference type="ChEBI" id="CHEBI:16389"/>
        <dbReference type="ChEBI" id="CHEBI:17976"/>
        <dbReference type="ChEBI" id="CHEBI:29101"/>
        <dbReference type="ChEBI" id="CHEBI:57540"/>
        <dbReference type="ChEBI" id="CHEBI:57945"/>
        <dbReference type="EC" id="7.2.1.1"/>
    </reaction>
</comment>
<comment type="cofactor">
    <cofactor evidence="1">
        <name>FMN</name>
        <dbReference type="ChEBI" id="CHEBI:58210"/>
    </cofactor>
</comment>
<comment type="subunit">
    <text evidence="1">Composed of six subunits; NqrA, NqrB, NqrC, NqrD, NqrE and NqrF.</text>
</comment>
<comment type="subcellular location">
    <subcellularLocation>
        <location evidence="1">Cell inner membrane</location>
        <topology evidence="1">Multi-pass membrane protein</topology>
    </subcellularLocation>
</comment>
<comment type="similarity">
    <text evidence="1">Belongs to the NqrB/RnfD family.</text>
</comment>
<evidence type="ECO:0000255" key="1">
    <source>
        <dbReference type="HAMAP-Rule" id="MF_00426"/>
    </source>
</evidence>
<sequence length="403" mass="44069">MGLRNLLDKVEHHFEKGGRYEKWYPLYEAVDTFLYRPGSVTRTTAHVRDGIDLKRMMIIVWLCTFPAMFFGMYNVGHQANLIFAQSPDLLSAQDGWRFALIGALAGFDPNSLWDCLVQGAAYFLPVYLTTFIVGGFWEVLFASIRRHEVNEGFFVTSVLFALTLPPSVPLWQVALGISFGVVLGKEVFGGTGKNFLNPALVGRAFLFFAYPAQMSGDAVWTSVDGFAGATSLSLAAAGGVDNILGHGLTWMDAFLGHMQGSMGETSTLAIFIGGAVLLLTRIASWRIVAGVMLGMVAMSYLFNAIGSASNPMFAMPWYWHLVTGGFAFGMIFMATDPVSASMTDTGKWLFGALIGVMVMLIRVVNPAFPEGMMLAILFANLFAPLIDHFVVQANIKRRLARNG</sequence>
<keyword id="KW-0997">Cell inner membrane</keyword>
<keyword id="KW-1003">Cell membrane</keyword>
<keyword id="KW-0285">Flavoprotein</keyword>
<keyword id="KW-0288">FMN</keyword>
<keyword id="KW-0406">Ion transport</keyword>
<keyword id="KW-0472">Membrane</keyword>
<keyword id="KW-0520">NAD</keyword>
<keyword id="KW-0597">Phosphoprotein</keyword>
<keyword id="KW-0915">Sodium</keyword>
<keyword id="KW-0739">Sodium transport</keyword>
<keyword id="KW-1278">Translocase</keyword>
<keyword id="KW-0812">Transmembrane</keyword>
<keyword id="KW-1133">Transmembrane helix</keyword>
<keyword id="KW-0813">Transport</keyword>
<keyword id="KW-0830">Ubiquinone</keyword>
<reference key="1">
    <citation type="journal article" date="2009" name="Genome Res.">
        <title>Newly introduced genomic prophage islands are critical determinants of in vivo competitiveness in the Liverpool epidemic strain of Pseudomonas aeruginosa.</title>
        <authorList>
            <person name="Winstanley C."/>
            <person name="Langille M.G.I."/>
            <person name="Fothergill J.L."/>
            <person name="Kukavica-Ibrulj I."/>
            <person name="Paradis-Bleau C."/>
            <person name="Sanschagrin F."/>
            <person name="Thomson N.R."/>
            <person name="Winsor G.L."/>
            <person name="Quail M.A."/>
            <person name="Lennard N."/>
            <person name="Bignell A."/>
            <person name="Clarke L."/>
            <person name="Seeger K."/>
            <person name="Saunders D."/>
            <person name="Harris D."/>
            <person name="Parkhill J."/>
            <person name="Hancock R.E.W."/>
            <person name="Brinkman F.S.L."/>
            <person name="Levesque R.C."/>
        </authorList>
    </citation>
    <scope>NUCLEOTIDE SEQUENCE [LARGE SCALE GENOMIC DNA]</scope>
    <source>
        <strain>LESB58</strain>
    </source>
</reference>
<proteinExistence type="inferred from homology"/>
<protein>
    <recommendedName>
        <fullName evidence="1">Na(+)-translocating NADH-quinone reductase subunit B</fullName>
        <shortName evidence="1">Na(+)-NQR subunit B</shortName>
        <shortName evidence="1">Na(+)-translocating NQR subunit B</shortName>
        <ecNumber evidence="1">7.2.1.1</ecNumber>
    </recommendedName>
    <alternativeName>
        <fullName evidence="1">NQR complex subunit B</fullName>
    </alternativeName>
    <alternativeName>
        <fullName evidence="1">NQR-1 subunit B</fullName>
    </alternativeName>
</protein>
<feature type="chain" id="PRO_1000191665" description="Na(+)-translocating NADH-quinone reductase subunit B">
    <location>
        <begin position="1"/>
        <end position="403"/>
    </location>
</feature>
<feature type="transmembrane region" description="Helical" evidence="1">
    <location>
        <begin position="56"/>
        <end position="76"/>
    </location>
</feature>
<feature type="transmembrane region" description="Helical" evidence="1">
    <location>
        <begin position="121"/>
        <end position="141"/>
    </location>
</feature>
<feature type="transmembrane region" description="Helical" evidence="1">
    <location>
        <begin position="164"/>
        <end position="184"/>
    </location>
</feature>
<feature type="transmembrane region" description="Helical" evidence="1">
    <location>
        <begin position="225"/>
        <end position="245"/>
    </location>
</feature>
<feature type="transmembrane region" description="Helical" evidence="1">
    <location>
        <begin position="260"/>
        <end position="280"/>
    </location>
</feature>
<feature type="transmembrane region" description="Helical" evidence="1">
    <location>
        <begin position="287"/>
        <end position="307"/>
    </location>
</feature>
<feature type="transmembrane region" description="Helical" evidence="1">
    <location>
        <begin position="312"/>
        <end position="332"/>
    </location>
</feature>
<feature type="transmembrane region" description="Helical" evidence="1">
    <location>
        <begin position="348"/>
        <end position="368"/>
    </location>
</feature>
<feature type="transmembrane region" description="Helical" evidence="1">
    <location>
        <begin position="371"/>
        <end position="391"/>
    </location>
</feature>
<feature type="modified residue" description="FMN phosphoryl threonine" evidence="1">
    <location>
        <position position="230"/>
    </location>
</feature>
<accession>B7UZT8</accession>